<comment type="function">
    <text>Involved in 6-O-carbamoylation of Nod-factors.</text>
</comment>
<comment type="similarity">
    <text evidence="1">Belongs to the NodU/CmcH family.</text>
</comment>
<proteinExistence type="inferred from homology"/>
<feature type="chain" id="PRO_0000207847" description="Nodulation protein U">
    <location>
        <begin position="1"/>
        <end position="560"/>
    </location>
</feature>
<accession>Q07759</accession>
<accession>A8IP01</accession>
<name>NODU_AZOC5</name>
<reference key="1">
    <citation type="journal article" date="1993" name="Mol. Microbiol.">
        <title>Identification of nodSUIJ genes in Nod locus 1 of Azorhizobium caulinodans: evidence that nodS encodes a methyltransferase involved in Nod factor modification.</title>
        <authorList>
            <person name="Geelen D."/>
            <person name="Mergaert P."/>
            <person name="Geremia R.A."/>
            <person name="Goormachtig S."/>
            <person name="van Montagu M."/>
            <person name="Holsters M."/>
        </authorList>
    </citation>
    <scope>NUCLEOTIDE SEQUENCE [GENOMIC DNA]</scope>
</reference>
<reference key="2">
    <citation type="submission" date="2007-04" db="EMBL/GenBank/DDBJ databases">
        <title>Complete genome sequence of the nitrogen-fixing bacterium Azorhizobium caulinodans ORS571.</title>
        <authorList>
            <person name="Lee K.B."/>
            <person name="Backer P.D."/>
            <person name="Aono T."/>
            <person name="Liu C.T."/>
            <person name="Suzuki S."/>
            <person name="Suzuki T."/>
            <person name="Kaneko T."/>
            <person name="Yamada M."/>
            <person name="Tabata S."/>
            <person name="Kupfer D.M."/>
            <person name="Najar F.Z."/>
            <person name="Wiley G.B."/>
            <person name="Roe B."/>
            <person name="Binnewies T."/>
            <person name="Ussery D."/>
            <person name="Vereecke D."/>
            <person name="Gevers D."/>
            <person name="Holsters M."/>
            <person name="Oyaizu H."/>
        </authorList>
    </citation>
    <scope>NUCLEOTIDE SEQUENCE [LARGE SCALE GENOMIC DNA]</scope>
    <source>
        <strain>ATCC 43989 / DSM 5975 / JCM 20966 / LMG 6465 / NBRC 14845 / NCIMB 13405 / ORS 571</strain>
    </source>
</reference>
<reference key="3">
    <citation type="journal article" date="1989" name="Mol. Gen. Genet.">
        <title>Common nodABC genes in Nod locus 1 of Azorhizobium caulinodans: nucleotide sequence and plant-inducible expression.</title>
        <authorList>
            <person name="Goethals K."/>
            <person name="Gao M."/>
            <person name="Tomekpe K."/>
            <person name="van Montagu M."/>
            <person name="Holsters M."/>
        </authorList>
    </citation>
    <scope>NUCLEOTIDE SEQUENCE [GENOMIC DNA] OF 1-103</scope>
</reference>
<dbReference type="EC" id="2.1.3.-"/>
<dbReference type="EMBL" id="L18897">
    <property type="protein sequence ID" value="AAB51166.1"/>
    <property type="molecule type" value="Genomic_DNA"/>
</dbReference>
<dbReference type="EMBL" id="AP009384">
    <property type="protein sequence ID" value="BAF89812.1"/>
    <property type="molecule type" value="Genomic_DNA"/>
</dbReference>
<dbReference type="PIR" id="S35006">
    <property type="entry name" value="PQ0041"/>
</dbReference>
<dbReference type="RefSeq" id="WP_012172337.1">
    <property type="nucleotide sequence ID" value="NC_009937.1"/>
</dbReference>
<dbReference type="SMR" id="Q07759"/>
<dbReference type="STRING" id="438753.AZC_3814"/>
<dbReference type="KEGG" id="azc:AZC_3814"/>
<dbReference type="eggNOG" id="COG2192">
    <property type="taxonomic scope" value="Bacteria"/>
</dbReference>
<dbReference type="HOGENOM" id="CLU_014411_2_2_5"/>
<dbReference type="Proteomes" id="UP000000270">
    <property type="component" value="Chromosome"/>
</dbReference>
<dbReference type="GO" id="GO:0016740">
    <property type="term" value="F:transferase activity"/>
    <property type="evidence" value="ECO:0007669"/>
    <property type="project" value="UniProtKB-KW"/>
</dbReference>
<dbReference type="GO" id="GO:0009058">
    <property type="term" value="P:biosynthetic process"/>
    <property type="evidence" value="ECO:0007669"/>
    <property type="project" value="InterPro"/>
</dbReference>
<dbReference type="CDD" id="cd24101">
    <property type="entry name" value="ASKHA_NBD_NodU_N"/>
    <property type="match status" value="1"/>
</dbReference>
<dbReference type="Gene3D" id="3.30.420.40">
    <property type="match status" value="1"/>
</dbReference>
<dbReference type="Gene3D" id="3.90.870.20">
    <property type="entry name" value="Carbamoyltransferase, C-terminal domain"/>
    <property type="match status" value="1"/>
</dbReference>
<dbReference type="InterPro" id="IPR031730">
    <property type="entry name" value="Carbam_trans_C"/>
</dbReference>
<dbReference type="InterPro" id="IPR038152">
    <property type="entry name" value="Carbam_trans_C_sf"/>
</dbReference>
<dbReference type="InterPro" id="IPR003696">
    <property type="entry name" value="Carbtransf_dom"/>
</dbReference>
<dbReference type="InterPro" id="IPR051338">
    <property type="entry name" value="NodU/CmcH_Carbamoyltrnsfr"/>
</dbReference>
<dbReference type="PANTHER" id="PTHR34847">
    <property type="entry name" value="NODULATION PROTEIN U"/>
    <property type="match status" value="1"/>
</dbReference>
<dbReference type="PANTHER" id="PTHR34847:SF1">
    <property type="entry name" value="NODULATION PROTEIN U"/>
    <property type="match status" value="1"/>
</dbReference>
<dbReference type="Pfam" id="PF16861">
    <property type="entry name" value="Carbam_trans_C"/>
    <property type="match status" value="1"/>
</dbReference>
<dbReference type="Pfam" id="PF02543">
    <property type="entry name" value="Carbam_trans_N"/>
    <property type="match status" value="1"/>
</dbReference>
<sequence length="560" mass="61831">MKRCGLKLTHDGGVAVLDGRDLVACIEMEKLTNNERYRRIEHTDEIALALHRSGFQPSDIDEYIIDGWDGEVDAWVELLGAAGRVQLKVAPYVEKEPDRANEFTQGFGLNILGRDYTYKSAPHVMGHIASVYCTSPFAIFKQKALCLVWDGSIWPRLYEISDGGIRFINTLFPMIGHAYACAGHHFGPYKNADRTSWKLDLAGKLMSYMSTGTVDSRITAAIQTSYQNNLAGHSPNALSYRRMSANTSVALIQTHRFFEEIGVLVAGAPEHDILATFHYFVERLLIETLRHELARAGRNMSRNLCISGGCGLNIKWNSALRSSGLFRDVWVSPFPNDSGSAIGAACSALVANDGLVPINWSVFSGPHLVKSTPDANWRGSACELSELAALLADGEPVVFLAGRAELGPRALGARSILAPASDRSMKDRLNAAKQREYFRPVAPICLEDRAPEIFEPGSNDRYMLYDHKVREGWRDRVPAIMHLDGSARVQTIARTSAHPVAKLLVEYEKLTNIPLLCNTSANALGRGFFPDVASACTWGRIAKVWAENVLWSNDVDARIP</sequence>
<evidence type="ECO:0000305" key="1"/>
<organism>
    <name type="scientific">Azorhizobium caulinodans (strain ATCC 43989 / DSM 5975 / JCM 20966 / LMG 6465 / NBRC 14845 / NCIMB 13405 / ORS 571)</name>
    <dbReference type="NCBI Taxonomy" id="438753"/>
    <lineage>
        <taxon>Bacteria</taxon>
        <taxon>Pseudomonadati</taxon>
        <taxon>Pseudomonadota</taxon>
        <taxon>Alphaproteobacteria</taxon>
        <taxon>Hyphomicrobiales</taxon>
        <taxon>Xanthobacteraceae</taxon>
        <taxon>Azorhizobium</taxon>
    </lineage>
</organism>
<protein>
    <recommendedName>
        <fullName>Nodulation protein U</fullName>
        <ecNumber>2.1.3.-</ecNumber>
    </recommendedName>
</protein>
<gene>
    <name type="primary">nodU</name>
    <name type="ordered locus">AZC_3814</name>
</gene>
<keyword id="KW-0536">Nodulation</keyword>
<keyword id="KW-1185">Reference proteome</keyword>
<keyword id="KW-0808">Transferase</keyword>